<feature type="chain" id="PRO_0000047153" description="Transcription factor Sp8">
    <location>
        <begin position="1"/>
        <end position="486"/>
    </location>
</feature>
<feature type="zinc finger region" description="C2H2-type 1" evidence="2">
    <location>
        <begin position="356"/>
        <end position="380"/>
    </location>
</feature>
<feature type="zinc finger region" description="C2H2-type 2" evidence="2">
    <location>
        <begin position="386"/>
        <end position="410"/>
    </location>
</feature>
<feature type="zinc finger region" description="C2H2-type 3" evidence="2">
    <location>
        <begin position="416"/>
        <end position="438"/>
    </location>
</feature>
<feature type="region of interest" description="Disordered" evidence="3">
    <location>
        <begin position="1"/>
        <end position="46"/>
    </location>
</feature>
<feature type="region of interest" description="Disordered" evidence="3">
    <location>
        <begin position="136"/>
        <end position="157"/>
    </location>
</feature>
<feature type="region of interest" description="Disordered" evidence="3">
    <location>
        <begin position="294"/>
        <end position="324"/>
    </location>
</feature>
<feature type="region of interest" description="Disordered" evidence="3">
    <location>
        <begin position="432"/>
        <end position="486"/>
    </location>
</feature>
<feature type="short sequence motif" description="9aaTAD" evidence="1">
    <location>
        <begin position="208"/>
        <end position="216"/>
    </location>
</feature>
<feature type="compositionally biased region" description="Low complexity" evidence="3">
    <location>
        <begin position="16"/>
        <end position="25"/>
    </location>
</feature>
<feature type="compositionally biased region" description="Low complexity" evidence="3">
    <location>
        <begin position="36"/>
        <end position="46"/>
    </location>
</feature>
<feature type="compositionally biased region" description="Gly residues" evidence="3">
    <location>
        <begin position="136"/>
        <end position="149"/>
    </location>
</feature>
<feature type="compositionally biased region" description="Low complexity" evidence="3">
    <location>
        <begin position="294"/>
        <end position="305"/>
    </location>
</feature>
<feature type="compositionally biased region" description="Gly residues" evidence="3">
    <location>
        <begin position="439"/>
        <end position="451"/>
    </location>
</feature>
<accession>Q8BMJ8</accession>
<accession>Q8BWA3</accession>
<organism>
    <name type="scientific">Mus musculus</name>
    <name type="common">Mouse</name>
    <dbReference type="NCBI Taxonomy" id="10090"/>
    <lineage>
        <taxon>Eukaryota</taxon>
        <taxon>Metazoa</taxon>
        <taxon>Chordata</taxon>
        <taxon>Craniata</taxon>
        <taxon>Vertebrata</taxon>
        <taxon>Euteleostomi</taxon>
        <taxon>Mammalia</taxon>
        <taxon>Eutheria</taxon>
        <taxon>Euarchontoglires</taxon>
        <taxon>Glires</taxon>
        <taxon>Rodentia</taxon>
        <taxon>Myomorpha</taxon>
        <taxon>Muroidea</taxon>
        <taxon>Muridae</taxon>
        <taxon>Murinae</taxon>
        <taxon>Mus</taxon>
        <taxon>Mus</taxon>
    </lineage>
</organism>
<gene>
    <name type="primary">Sp8</name>
</gene>
<evidence type="ECO:0000250" key="1">
    <source>
        <dbReference type="UniProtKB" id="Q8IXZ3"/>
    </source>
</evidence>
<evidence type="ECO:0000255" key="2">
    <source>
        <dbReference type="PROSITE-ProRule" id="PRU00042"/>
    </source>
</evidence>
<evidence type="ECO:0000256" key="3">
    <source>
        <dbReference type="SAM" id="MobiDB-lite"/>
    </source>
</evidence>
<evidence type="ECO:0000269" key="4">
    <source>
    </source>
</evidence>
<evidence type="ECO:0000305" key="5"/>
<dbReference type="EMBL" id="AK030745">
    <property type="protein sequence ID" value="BAC27113.1"/>
    <property type="molecule type" value="mRNA"/>
</dbReference>
<dbReference type="EMBL" id="AK053093">
    <property type="protein sequence ID" value="BAC35264.1"/>
    <property type="molecule type" value="mRNA"/>
</dbReference>
<dbReference type="CCDS" id="CCDS26213.1"/>
<dbReference type="RefSeq" id="NP_001366309.1">
    <property type="nucleotide sequence ID" value="NM_001379380.1"/>
</dbReference>
<dbReference type="RefSeq" id="NP_796056.2">
    <property type="nucleotide sequence ID" value="NM_177082.4"/>
</dbReference>
<dbReference type="RefSeq" id="XP_006516046.1">
    <property type="nucleotide sequence ID" value="XM_006515983.5"/>
</dbReference>
<dbReference type="RefSeq" id="XP_006516047.1">
    <property type="nucleotide sequence ID" value="XM_006515984.3"/>
</dbReference>
<dbReference type="RefSeq" id="XP_006516048.1">
    <property type="nucleotide sequence ID" value="XM_006515985.5"/>
</dbReference>
<dbReference type="RefSeq" id="XP_006516049.1">
    <property type="nucleotide sequence ID" value="XM_006515986.5"/>
</dbReference>
<dbReference type="RefSeq" id="XP_006516050.1">
    <property type="nucleotide sequence ID" value="XM_006515987.5"/>
</dbReference>
<dbReference type="RefSeq" id="XP_006516051.1">
    <property type="nucleotide sequence ID" value="XM_006515988.5"/>
</dbReference>
<dbReference type="RefSeq" id="XP_011242426.1">
    <property type="nucleotide sequence ID" value="XM_011244124.4"/>
</dbReference>
<dbReference type="SMR" id="Q8BMJ8"/>
<dbReference type="FunCoup" id="Q8BMJ8">
    <property type="interactions" value="15"/>
</dbReference>
<dbReference type="STRING" id="10090.ENSMUSP00000065746"/>
<dbReference type="iPTMnet" id="Q8BMJ8"/>
<dbReference type="PhosphoSitePlus" id="Q8BMJ8"/>
<dbReference type="PaxDb" id="10090-ENSMUSP00000065746"/>
<dbReference type="ProteomicsDB" id="257332"/>
<dbReference type="Antibodypedia" id="53277">
    <property type="antibodies" value="67 antibodies from 14 providers"/>
</dbReference>
<dbReference type="DNASU" id="320145"/>
<dbReference type="Ensembl" id="ENSMUST00000063918.4">
    <property type="protein sequence ID" value="ENSMUSP00000065746.3"/>
    <property type="gene ID" value="ENSMUSG00000048562.8"/>
</dbReference>
<dbReference type="GeneID" id="320145"/>
<dbReference type="KEGG" id="mmu:320145"/>
<dbReference type="UCSC" id="uc007pig.2">
    <property type="organism name" value="mouse"/>
</dbReference>
<dbReference type="AGR" id="MGI:2443471"/>
<dbReference type="CTD" id="221833"/>
<dbReference type="MGI" id="MGI:2443471">
    <property type="gene designation" value="Sp8"/>
</dbReference>
<dbReference type="VEuPathDB" id="HostDB:ENSMUSG00000048562"/>
<dbReference type="eggNOG" id="KOG1721">
    <property type="taxonomic scope" value="Eukaryota"/>
</dbReference>
<dbReference type="GeneTree" id="ENSGT00940000162033"/>
<dbReference type="HOGENOM" id="CLU_019484_4_1_1"/>
<dbReference type="InParanoid" id="Q8BMJ8"/>
<dbReference type="OMA" id="GNEYSVF"/>
<dbReference type="OrthoDB" id="6365676at2759"/>
<dbReference type="PhylomeDB" id="Q8BMJ8"/>
<dbReference type="TreeFam" id="TF350150"/>
<dbReference type="BioGRID-ORCS" id="320145">
    <property type="hits" value="3 hits in 79 CRISPR screens"/>
</dbReference>
<dbReference type="PRO" id="PR:Q8BMJ8"/>
<dbReference type="Proteomes" id="UP000000589">
    <property type="component" value="Chromosome 12"/>
</dbReference>
<dbReference type="RNAct" id="Q8BMJ8">
    <property type="molecule type" value="protein"/>
</dbReference>
<dbReference type="Bgee" id="ENSMUSG00000048562">
    <property type="expression patterns" value="Expressed in rostral migratory stream and 66 other cell types or tissues"/>
</dbReference>
<dbReference type="ExpressionAtlas" id="Q8BMJ8">
    <property type="expression patterns" value="baseline and differential"/>
</dbReference>
<dbReference type="GO" id="GO:0005634">
    <property type="term" value="C:nucleus"/>
    <property type="evidence" value="ECO:0007669"/>
    <property type="project" value="UniProtKB-SubCell"/>
</dbReference>
<dbReference type="GO" id="GO:0003677">
    <property type="term" value="F:DNA binding"/>
    <property type="evidence" value="ECO:0000250"/>
    <property type="project" value="MGI"/>
</dbReference>
<dbReference type="GO" id="GO:1990837">
    <property type="term" value="F:sequence-specific double-stranded DNA binding"/>
    <property type="evidence" value="ECO:0007669"/>
    <property type="project" value="Ensembl"/>
</dbReference>
<dbReference type="GO" id="GO:0008270">
    <property type="term" value="F:zinc ion binding"/>
    <property type="evidence" value="ECO:0007669"/>
    <property type="project" value="UniProtKB-KW"/>
</dbReference>
<dbReference type="GO" id="GO:0009953">
    <property type="term" value="P:dorsal/ventral pattern formation"/>
    <property type="evidence" value="ECO:0000315"/>
    <property type="project" value="MGI"/>
</dbReference>
<dbReference type="GO" id="GO:0030326">
    <property type="term" value="P:embryonic limb morphogenesis"/>
    <property type="evidence" value="ECO:0000315"/>
    <property type="project" value="UniProtKB"/>
</dbReference>
<dbReference type="GO" id="GO:0009954">
    <property type="term" value="P:proximal/distal pattern formation"/>
    <property type="evidence" value="ECO:0000315"/>
    <property type="project" value="MGI"/>
</dbReference>
<dbReference type="CDD" id="cd22538">
    <property type="entry name" value="SP8_N"/>
    <property type="match status" value="1"/>
</dbReference>
<dbReference type="FunFam" id="3.30.160.60:FF:000077">
    <property type="entry name" value="Sp8 transcription factor"/>
    <property type="match status" value="1"/>
</dbReference>
<dbReference type="FunFam" id="3.30.160.60:FF:000014">
    <property type="entry name" value="Transcription factor Sp3"/>
    <property type="match status" value="1"/>
</dbReference>
<dbReference type="FunFam" id="3.30.160.60:FF:000026">
    <property type="entry name" value="Transcription factor Sp3"/>
    <property type="match status" value="1"/>
</dbReference>
<dbReference type="Gene3D" id="3.30.160.60">
    <property type="entry name" value="Classic Zinc Finger"/>
    <property type="match status" value="3"/>
</dbReference>
<dbReference type="InterPro" id="IPR036236">
    <property type="entry name" value="Znf_C2H2_sf"/>
</dbReference>
<dbReference type="InterPro" id="IPR013087">
    <property type="entry name" value="Znf_C2H2_type"/>
</dbReference>
<dbReference type="PANTHER" id="PTHR23235">
    <property type="entry name" value="KRUEPPEL-LIKE TRANSCRIPTION FACTOR"/>
    <property type="match status" value="1"/>
</dbReference>
<dbReference type="PANTHER" id="PTHR23235:SF25">
    <property type="entry name" value="TRANSCRIPTION FACTOR SP8"/>
    <property type="match status" value="1"/>
</dbReference>
<dbReference type="Pfam" id="PF00096">
    <property type="entry name" value="zf-C2H2"/>
    <property type="match status" value="3"/>
</dbReference>
<dbReference type="SMART" id="SM00355">
    <property type="entry name" value="ZnF_C2H2"/>
    <property type="match status" value="3"/>
</dbReference>
<dbReference type="SUPFAM" id="SSF57667">
    <property type="entry name" value="beta-beta-alpha zinc fingers"/>
    <property type="match status" value="2"/>
</dbReference>
<dbReference type="PROSITE" id="PS00028">
    <property type="entry name" value="ZINC_FINGER_C2H2_1"/>
    <property type="match status" value="3"/>
</dbReference>
<dbReference type="PROSITE" id="PS50157">
    <property type="entry name" value="ZINC_FINGER_C2H2_2"/>
    <property type="match status" value="3"/>
</dbReference>
<reference key="1">
    <citation type="journal article" date="2005" name="Science">
        <title>The transcriptional landscape of the mammalian genome.</title>
        <authorList>
            <person name="Carninci P."/>
            <person name="Kasukawa T."/>
            <person name="Katayama S."/>
            <person name="Gough J."/>
            <person name="Frith M.C."/>
            <person name="Maeda N."/>
            <person name="Oyama R."/>
            <person name="Ravasi T."/>
            <person name="Lenhard B."/>
            <person name="Wells C."/>
            <person name="Kodzius R."/>
            <person name="Shimokawa K."/>
            <person name="Bajic V.B."/>
            <person name="Brenner S.E."/>
            <person name="Batalov S."/>
            <person name="Forrest A.R."/>
            <person name="Zavolan M."/>
            <person name="Davis M.J."/>
            <person name="Wilming L.G."/>
            <person name="Aidinis V."/>
            <person name="Allen J.E."/>
            <person name="Ambesi-Impiombato A."/>
            <person name="Apweiler R."/>
            <person name="Aturaliya R.N."/>
            <person name="Bailey T.L."/>
            <person name="Bansal M."/>
            <person name="Baxter L."/>
            <person name="Beisel K.W."/>
            <person name="Bersano T."/>
            <person name="Bono H."/>
            <person name="Chalk A.M."/>
            <person name="Chiu K.P."/>
            <person name="Choudhary V."/>
            <person name="Christoffels A."/>
            <person name="Clutterbuck D.R."/>
            <person name="Crowe M.L."/>
            <person name="Dalla E."/>
            <person name="Dalrymple B.P."/>
            <person name="de Bono B."/>
            <person name="Della Gatta G."/>
            <person name="di Bernardo D."/>
            <person name="Down T."/>
            <person name="Engstrom P."/>
            <person name="Fagiolini M."/>
            <person name="Faulkner G."/>
            <person name="Fletcher C.F."/>
            <person name="Fukushima T."/>
            <person name="Furuno M."/>
            <person name="Futaki S."/>
            <person name="Gariboldi M."/>
            <person name="Georgii-Hemming P."/>
            <person name="Gingeras T.R."/>
            <person name="Gojobori T."/>
            <person name="Green R.E."/>
            <person name="Gustincich S."/>
            <person name="Harbers M."/>
            <person name="Hayashi Y."/>
            <person name="Hensch T.K."/>
            <person name="Hirokawa N."/>
            <person name="Hill D."/>
            <person name="Huminiecki L."/>
            <person name="Iacono M."/>
            <person name="Ikeo K."/>
            <person name="Iwama A."/>
            <person name="Ishikawa T."/>
            <person name="Jakt M."/>
            <person name="Kanapin A."/>
            <person name="Katoh M."/>
            <person name="Kawasawa Y."/>
            <person name="Kelso J."/>
            <person name="Kitamura H."/>
            <person name="Kitano H."/>
            <person name="Kollias G."/>
            <person name="Krishnan S.P."/>
            <person name="Kruger A."/>
            <person name="Kummerfeld S.K."/>
            <person name="Kurochkin I.V."/>
            <person name="Lareau L.F."/>
            <person name="Lazarevic D."/>
            <person name="Lipovich L."/>
            <person name="Liu J."/>
            <person name="Liuni S."/>
            <person name="McWilliam S."/>
            <person name="Madan Babu M."/>
            <person name="Madera M."/>
            <person name="Marchionni L."/>
            <person name="Matsuda H."/>
            <person name="Matsuzawa S."/>
            <person name="Miki H."/>
            <person name="Mignone F."/>
            <person name="Miyake S."/>
            <person name="Morris K."/>
            <person name="Mottagui-Tabar S."/>
            <person name="Mulder N."/>
            <person name="Nakano N."/>
            <person name="Nakauchi H."/>
            <person name="Ng P."/>
            <person name="Nilsson R."/>
            <person name="Nishiguchi S."/>
            <person name="Nishikawa S."/>
            <person name="Nori F."/>
            <person name="Ohara O."/>
            <person name="Okazaki Y."/>
            <person name="Orlando V."/>
            <person name="Pang K.C."/>
            <person name="Pavan W.J."/>
            <person name="Pavesi G."/>
            <person name="Pesole G."/>
            <person name="Petrovsky N."/>
            <person name="Piazza S."/>
            <person name="Reed J."/>
            <person name="Reid J.F."/>
            <person name="Ring B.Z."/>
            <person name="Ringwald M."/>
            <person name="Rost B."/>
            <person name="Ruan Y."/>
            <person name="Salzberg S.L."/>
            <person name="Sandelin A."/>
            <person name="Schneider C."/>
            <person name="Schoenbach C."/>
            <person name="Sekiguchi K."/>
            <person name="Semple C.A."/>
            <person name="Seno S."/>
            <person name="Sessa L."/>
            <person name="Sheng Y."/>
            <person name="Shibata Y."/>
            <person name="Shimada H."/>
            <person name="Shimada K."/>
            <person name="Silva D."/>
            <person name="Sinclair B."/>
            <person name="Sperling S."/>
            <person name="Stupka E."/>
            <person name="Sugiura K."/>
            <person name="Sultana R."/>
            <person name="Takenaka Y."/>
            <person name="Taki K."/>
            <person name="Tammoja K."/>
            <person name="Tan S.L."/>
            <person name="Tang S."/>
            <person name="Taylor M.S."/>
            <person name="Tegner J."/>
            <person name="Teichmann S.A."/>
            <person name="Ueda H.R."/>
            <person name="van Nimwegen E."/>
            <person name="Verardo R."/>
            <person name="Wei C.L."/>
            <person name="Yagi K."/>
            <person name="Yamanishi H."/>
            <person name="Zabarovsky E."/>
            <person name="Zhu S."/>
            <person name="Zimmer A."/>
            <person name="Hide W."/>
            <person name="Bult C."/>
            <person name="Grimmond S.M."/>
            <person name="Teasdale R.D."/>
            <person name="Liu E.T."/>
            <person name="Brusic V."/>
            <person name="Quackenbush J."/>
            <person name="Wahlestedt C."/>
            <person name="Mattick J.S."/>
            <person name="Hume D.A."/>
            <person name="Kai C."/>
            <person name="Sasaki D."/>
            <person name="Tomaru Y."/>
            <person name="Fukuda S."/>
            <person name="Kanamori-Katayama M."/>
            <person name="Suzuki M."/>
            <person name="Aoki J."/>
            <person name="Arakawa T."/>
            <person name="Iida J."/>
            <person name="Imamura K."/>
            <person name="Itoh M."/>
            <person name="Kato T."/>
            <person name="Kawaji H."/>
            <person name="Kawagashira N."/>
            <person name="Kawashima T."/>
            <person name="Kojima M."/>
            <person name="Kondo S."/>
            <person name="Konno H."/>
            <person name="Nakano K."/>
            <person name="Ninomiya N."/>
            <person name="Nishio T."/>
            <person name="Okada M."/>
            <person name="Plessy C."/>
            <person name="Shibata K."/>
            <person name="Shiraki T."/>
            <person name="Suzuki S."/>
            <person name="Tagami M."/>
            <person name="Waki K."/>
            <person name="Watahiki A."/>
            <person name="Okamura-Oho Y."/>
            <person name="Suzuki H."/>
            <person name="Kawai J."/>
            <person name="Hayashizaki Y."/>
        </authorList>
    </citation>
    <scope>NUCLEOTIDE SEQUENCE [LARGE SCALE MRNA]</scope>
    <source>
        <strain>C57BL/6J</strain>
        <tissue>Head</tissue>
    </source>
</reference>
<reference key="2">
    <citation type="journal article" date="2004" name="Development">
        <title>Sp8 and Sp9, two closely related buttonhead-like transcription factors, regulate Fgf8 expression and limb outgrowth in vertebrate embryos.</title>
        <authorList>
            <person name="Kawakami Y."/>
            <person name="Rodriguez Esteban C."/>
            <person name="Matsui T."/>
            <person name="Rodriguez-Leon J."/>
            <person name="Kato S."/>
            <person name="Izpisua Belmonte J.C."/>
        </authorList>
    </citation>
    <scope>FUNCTION</scope>
    <scope>DEVELOPMENTAL STAGE</scope>
</reference>
<name>SP8_MOUSE</name>
<sequence>MLAATCNKIGSPSPSPSSLSDSSSSFGKGFHPWKRSSSSSSGSCNVVGSSLSSFGVSGASRNGGSSSAAAAAAAAAAAAAALVSDSFSCGGSPGSSAFSLTSSSAAAAAAAAAAAASSSPFANDYSVFQAPGVSGGSGGGGGGGGGGSGAHSQDSSHQPVFISKVHTSVDGLQGIYPRVGMAHPYESWFKPSHPGLGAAADVGSAGASSWWDVGAGWIDVQNPNGAAALPGSLHPAAGGLQTSLHSPLGGYNSDYSGLSHSAFSSGASSHLLSPAGQHLMDGFKPVLPGSYPDSAPSPLAGAGSSMLSAGPAAQLGGSPRSSARRYSGRATCDCPNCQEAERLGPAGASLRRKGLHSCHIPGCGKVYGKTSHLKAHLRWHTGERPFVCNWLFCGKRFTRSDELQRHLRTHTGEKRFACPVCNKRFMRSDHLSKHVKTHSGGGGSAGSGGGKKGSDTDSEHSAAGSPPCHSPELLQPPEPGHRNGLE</sequence>
<proteinExistence type="evidence at transcript level"/>
<protein>
    <recommendedName>
        <fullName>Transcription factor Sp8</fullName>
    </recommendedName>
</protein>
<keyword id="KW-0238">DNA-binding</keyword>
<keyword id="KW-0479">Metal-binding</keyword>
<keyword id="KW-0539">Nucleus</keyword>
<keyword id="KW-1185">Reference proteome</keyword>
<keyword id="KW-0677">Repeat</keyword>
<keyword id="KW-0804">Transcription</keyword>
<keyword id="KW-0805">Transcription regulation</keyword>
<keyword id="KW-0862">Zinc</keyword>
<keyword id="KW-0863">Zinc-finger</keyword>
<comment type="function">
    <text evidence="4">Transcription factor which plays a key role in limb development. Positively regulates FGF8 expression in the apical ectodermal ridge (AER) and contributes to limb outgrowth in embryos.</text>
</comment>
<comment type="subcellular location">
    <subcellularLocation>
        <location evidence="5">Nucleus</location>
    </subcellularLocation>
</comment>
<comment type="developmental stage">
    <text evidence="4">Expression is detected in the forebrain, midbrain/hindbrain boundary and neural tube. At the stage of limb bud outgrowth, expressed in a scattered manner in the ventral ectoderm, and is later confined to the apical ectodermal ridge (AER).</text>
</comment>
<comment type="domain">
    <text evidence="1">The 9aaTAD motif is a transactivation domain present in a large number of yeast and animal transcription factors.</text>
</comment>
<comment type="similarity">
    <text evidence="5">Belongs to the Sp1 C2H2-type zinc-finger protein family.</text>
</comment>